<reference key="1">
    <citation type="journal article" date="2010" name="Peptides">
        <title>Novel conopeptides in a form of disulfide-crosslinked dimer.</title>
        <authorList>
            <person name="Wu X.-C."/>
            <person name="Zhou M."/>
            <person name="Peng C."/>
            <person name="Shao X.-X."/>
            <person name="Guo Z.-Y."/>
            <person name="Chi C.-W."/>
        </authorList>
    </citation>
    <scope>NUCLEOTIDE SEQUENCE [MRNA]</scope>
    <source>
        <strain>C.vitulinus</strain>
        <tissue>Venom duct</tissue>
    </source>
</reference>
<accession>D5L5Q8</accession>
<protein>
    <recommendedName>
        <fullName evidence="3">Conopeptide Vt3.2</fullName>
    </recommendedName>
</protein>
<comment type="subunit">
    <text evidence="1">Homodimer; disulfide-linked.</text>
</comment>
<comment type="subcellular location">
    <subcellularLocation>
        <location evidence="5">Secreted</location>
    </subcellularLocation>
</comment>
<comment type="tissue specificity">
    <text evidence="5">Expressed by the venom duct.</text>
</comment>
<comment type="domain">
    <text evidence="4">The cysteine framework is C-C.</text>
</comment>
<comment type="similarity">
    <text evidence="4">Belongs to the conotoxin M superfamily.</text>
</comment>
<comment type="caution">
    <text evidence="5">The name Vt3.2 given by the authors is incorrect, since the first number indicates a cysteine framework III which does not correspond to this cysteine framework.</text>
</comment>
<comment type="caution">
    <text evidence="4">The status of C.vitulinus is unclear.</text>
</comment>
<dbReference type="EMBL" id="GU784863">
    <property type="protein sequence ID" value="ADE35089.1"/>
    <property type="molecule type" value="mRNA"/>
</dbReference>
<dbReference type="ConoServer" id="4060">
    <property type="toxin name" value="Vt3.2 precursor"/>
</dbReference>
<dbReference type="GO" id="GO:0005576">
    <property type="term" value="C:extracellular region"/>
    <property type="evidence" value="ECO:0007669"/>
    <property type="project" value="UniProtKB-SubCell"/>
</dbReference>
<dbReference type="GO" id="GO:0090729">
    <property type="term" value="F:toxin activity"/>
    <property type="evidence" value="ECO:0007669"/>
    <property type="project" value="UniProtKB-KW"/>
</dbReference>
<sequence>LLFPLATLQLNADQPVERNAENIQDLNPDKRFIFMPVPRRRGPYGSVHRRRGPYRRHGNCFCPSG</sequence>
<evidence type="ECO:0000250" key="1"/>
<evidence type="ECO:0000255" key="2"/>
<evidence type="ECO:0000303" key="3">
    <source>
    </source>
</evidence>
<evidence type="ECO:0000305" key="4"/>
<evidence type="ECO:0000305" key="5">
    <source>
    </source>
</evidence>
<organism>
    <name type="scientific">Conus planorbis</name>
    <name type="common">Planorbis cone</name>
    <dbReference type="NCBI Taxonomy" id="97183"/>
    <lineage>
        <taxon>Eukaryota</taxon>
        <taxon>Metazoa</taxon>
        <taxon>Spiralia</taxon>
        <taxon>Lophotrochozoa</taxon>
        <taxon>Mollusca</taxon>
        <taxon>Gastropoda</taxon>
        <taxon>Caenogastropoda</taxon>
        <taxon>Neogastropoda</taxon>
        <taxon>Conoidea</taxon>
        <taxon>Conidae</taxon>
        <taxon>Conus</taxon>
        <taxon>Strategoconus</taxon>
    </lineage>
</organism>
<name>CMCC2_CONPO</name>
<proteinExistence type="evidence at transcript level"/>
<feature type="signal peptide" evidence="2">
    <location>
        <begin position="1" status="less than"/>
        <end position="12"/>
    </location>
</feature>
<feature type="propeptide" id="PRO_0000397203" evidence="1">
    <location>
        <begin position="13"/>
        <end position="48"/>
    </location>
</feature>
<feature type="peptide" id="PRO_0000397204" description="Conopeptide Vt3.2">
    <location>
        <begin position="52"/>
        <end position="64"/>
    </location>
</feature>
<feature type="modified residue" description="Serine amide" evidence="2">
    <location>
        <position position="64"/>
    </location>
</feature>
<feature type="non-terminal residue">
    <location>
        <position position="1"/>
    </location>
</feature>
<keyword id="KW-0027">Amidation</keyword>
<keyword id="KW-0165">Cleavage on pair of basic residues</keyword>
<keyword id="KW-1015">Disulfide bond</keyword>
<keyword id="KW-0964">Secreted</keyword>
<keyword id="KW-0732">Signal</keyword>
<keyword id="KW-0800">Toxin</keyword>